<sequence length="125" mass="14744">MEYQFTHSIHGVVAKCSMDHEAFARWLNTEITENPKELINIFAEIEKCRAAYPNHYECVFEGKEYSLFLDCDEVMVKANNLDDAFDESQMEDGFQFYDQESIAFCGLEDFENFLKAYQKFSKTYH</sequence>
<accession>B3GXW0</accession>
<reference key="1">
    <citation type="submission" date="2008-06" db="EMBL/GenBank/DDBJ databases">
        <title>Genome and proteome analysis of A. pleuropneumoniae serotype 7.</title>
        <authorList>
            <person name="Linke B."/>
            <person name="Buettner F."/>
            <person name="Martinez-Arias R."/>
            <person name="Goesmann A."/>
            <person name="Baltes N."/>
            <person name="Tegetmeyer H."/>
            <person name="Singh M."/>
            <person name="Gerlach G.F."/>
        </authorList>
    </citation>
    <scope>NUCLEOTIDE SEQUENCE [LARGE SCALE GENOMIC DNA]</scope>
    <source>
        <strain>AP76</strain>
    </source>
</reference>
<proteinExistence type="inferred from homology"/>
<protein>
    <recommendedName>
        <fullName evidence="1">UPF0231 protein APP7_1023</fullName>
    </recommendedName>
</protein>
<organism>
    <name type="scientific">Actinobacillus pleuropneumoniae serotype 7 (strain AP76)</name>
    <dbReference type="NCBI Taxonomy" id="537457"/>
    <lineage>
        <taxon>Bacteria</taxon>
        <taxon>Pseudomonadati</taxon>
        <taxon>Pseudomonadota</taxon>
        <taxon>Gammaproteobacteria</taxon>
        <taxon>Pasteurellales</taxon>
        <taxon>Pasteurellaceae</taxon>
        <taxon>Actinobacillus</taxon>
    </lineage>
</organism>
<evidence type="ECO:0000255" key="1">
    <source>
        <dbReference type="HAMAP-Rule" id="MF_01053"/>
    </source>
</evidence>
<feature type="chain" id="PRO_1000136286" description="UPF0231 protein APP7_1023">
    <location>
        <begin position="1"/>
        <end position="125"/>
    </location>
</feature>
<dbReference type="EMBL" id="CP001091">
    <property type="protein sequence ID" value="ACE61675.1"/>
    <property type="molecule type" value="Genomic_DNA"/>
</dbReference>
<dbReference type="RefSeq" id="WP_005597676.1">
    <property type="nucleotide sequence ID" value="NC_010939.1"/>
</dbReference>
<dbReference type="KEGG" id="apa:APP7_1023"/>
<dbReference type="HOGENOM" id="CLU_139226_0_0_6"/>
<dbReference type="Proteomes" id="UP000001226">
    <property type="component" value="Chromosome"/>
</dbReference>
<dbReference type="HAMAP" id="MF_01053">
    <property type="entry name" value="UPF0231"/>
    <property type="match status" value="1"/>
</dbReference>
<dbReference type="InterPro" id="IPR008249">
    <property type="entry name" value="UPF0231"/>
</dbReference>
<dbReference type="NCBIfam" id="NF003575">
    <property type="entry name" value="PRK05248.1-2"/>
    <property type="match status" value="1"/>
</dbReference>
<dbReference type="Pfam" id="PF06062">
    <property type="entry name" value="UPF0231"/>
    <property type="match status" value="1"/>
</dbReference>
<dbReference type="PIRSF" id="PIRSF006287">
    <property type="entry name" value="UCP006287"/>
    <property type="match status" value="1"/>
</dbReference>
<name>Y1023_ACTP7</name>
<gene>
    <name type="ordered locus">APP7_1023</name>
</gene>
<comment type="similarity">
    <text evidence="1">Belongs to the UPF0231 family.</text>
</comment>